<comment type="function">
    <text evidence="1">Catalyzes the formation of sulfite from phosphoadenosine 5'-phosphosulfate (PAPS) using thioredoxin as an electron donor.</text>
</comment>
<comment type="catalytic activity">
    <reaction evidence="1">
        <text>[thioredoxin]-disulfide + sulfite + adenosine 3',5'-bisphosphate + 2 H(+) = [thioredoxin]-dithiol + 3'-phosphoadenylyl sulfate</text>
        <dbReference type="Rhea" id="RHEA:11724"/>
        <dbReference type="Rhea" id="RHEA-COMP:10698"/>
        <dbReference type="Rhea" id="RHEA-COMP:10700"/>
        <dbReference type="ChEBI" id="CHEBI:15378"/>
        <dbReference type="ChEBI" id="CHEBI:17359"/>
        <dbReference type="ChEBI" id="CHEBI:29950"/>
        <dbReference type="ChEBI" id="CHEBI:50058"/>
        <dbReference type="ChEBI" id="CHEBI:58339"/>
        <dbReference type="ChEBI" id="CHEBI:58343"/>
        <dbReference type="EC" id="1.8.4.8"/>
    </reaction>
</comment>
<comment type="pathway">
    <text evidence="1">Sulfur metabolism; hydrogen sulfide biosynthesis; sulfite from sulfate: step 3/3.</text>
</comment>
<comment type="subcellular location">
    <subcellularLocation>
        <location evidence="1">Cytoplasm</location>
    </subcellularLocation>
</comment>
<comment type="similarity">
    <text evidence="1">Belongs to the PAPS reductase family. CysH subfamily.</text>
</comment>
<name>CYSH_ECO8A</name>
<proteinExistence type="inferred from homology"/>
<keyword id="KW-0963">Cytoplasm</keyword>
<keyword id="KW-0560">Oxidoreductase</keyword>
<accession>B7LXH5</accession>
<feature type="chain" id="PRO_1000116950" description="Phosphoadenosine 5'-phosphosulfate reductase">
    <location>
        <begin position="1"/>
        <end position="244"/>
    </location>
</feature>
<feature type="active site" description="Nucleophile; cysteine thiosulfonate intermediate" evidence="1">
    <location>
        <position position="239"/>
    </location>
</feature>
<organism>
    <name type="scientific">Escherichia coli O8 (strain IAI1)</name>
    <dbReference type="NCBI Taxonomy" id="585034"/>
    <lineage>
        <taxon>Bacteria</taxon>
        <taxon>Pseudomonadati</taxon>
        <taxon>Pseudomonadota</taxon>
        <taxon>Gammaproteobacteria</taxon>
        <taxon>Enterobacterales</taxon>
        <taxon>Enterobacteriaceae</taxon>
        <taxon>Escherichia</taxon>
    </lineage>
</organism>
<evidence type="ECO:0000255" key="1">
    <source>
        <dbReference type="HAMAP-Rule" id="MF_00063"/>
    </source>
</evidence>
<reference key="1">
    <citation type="journal article" date="2009" name="PLoS Genet.">
        <title>Organised genome dynamics in the Escherichia coli species results in highly diverse adaptive paths.</title>
        <authorList>
            <person name="Touchon M."/>
            <person name="Hoede C."/>
            <person name="Tenaillon O."/>
            <person name="Barbe V."/>
            <person name="Baeriswyl S."/>
            <person name="Bidet P."/>
            <person name="Bingen E."/>
            <person name="Bonacorsi S."/>
            <person name="Bouchier C."/>
            <person name="Bouvet O."/>
            <person name="Calteau A."/>
            <person name="Chiapello H."/>
            <person name="Clermont O."/>
            <person name="Cruveiller S."/>
            <person name="Danchin A."/>
            <person name="Diard M."/>
            <person name="Dossat C."/>
            <person name="Karoui M.E."/>
            <person name="Frapy E."/>
            <person name="Garry L."/>
            <person name="Ghigo J.M."/>
            <person name="Gilles A.M."/>
            <person name="Johnson J."/>
            <person name="Le Bouguenec C."/>
            <person name="Lescat M."/>
            <person name="Mangenot S."/>
            <person name="Martinez-Jehanne V."/>
            <person name="Matic I."/>
            <person name="Nassif X."/>
            <person name="Oztas S."/>
            <person name="Petit M.A."/>
            <person name="Pichon C."/>
            <person name="Rouy Z."/>
            <person name="Ruf C.S."/>
            <person name="Schneider D."/>
            <person name="Tourret J."/>
            <person name="Vacherie B."/>
            <person name="Vallenet D."/>
            <person name="Medigue C."/>
            <person name="Rocha E.P.C."/>
            <person name="Denamur E."/>
        </authorList>
    </citation>
    <scope>NUCLEOTIDE SEQUENCE [LARGE SCALE GENOMIC DNA]</scope>
    <source>
        <strain>IAI1</strain>
    </source>
</reference>
<dbReference type="EC" id="1.8.4.8" evidence="1"/>
<dbReference type="EMBL" id="CU928160">
    <property type="protein sequence ID" value="CAQ99687.1"/>
    <property type="molecule type" value="Genomic_DNA"/>
</dbReference>
<dbReference type="RefSeq" id="WP_000039843.1">
    <property type="nucleotide sequence ID" value="NC_011741.1"/>
</dbReference>
<dbReference type="SMR" id="B7LXH5"/>
<dbReference type="GeneID" id="75205594"/>
<dbReference type="KEGG" id="ecr:ECIAI1_2866"/>
<dbReference type="HOGENOM" id="CLU_044089_3_0_6"/>
<dbReference type="UniPathway" id="UPA00140">
    <property type="reaction ID" value="UER00206"/>
</dbReference>
<dbReference type="GO" id="GO:0005737">
    <property type="term" value="C:cytoplasm"/>
    <property type="evidence" value="ECO:0007669"/>
    <property type="project" value="UniProtKB-SubCell"/>
</dbReference>
<dbReference type="GO" id="GO:0004604">
    <property type="term" value="F:phosphoadenylyl-sulfate reductase (thioredoxin) activity"/>
    <property type="evidence" value="ECO:0007669"/>
    <property type="project" value="UniProtKB-UniRule"/>
</dbReference>
<dbReference type="GO" id="GO:0070814">
    <property type="term" value="P:hydrogen sulfide biosynthetic process"/>
    <property type="evidence" value="ECO:0007669"/>
    <property type="project" value="UniProtKB-UniRule"/>
</dbReference>
<dbReference type="GO" id="GO:0019379">
    <property type="term" value="P:sulfate assimilation, phosphoadenylyl sulfate reduction by phosphoadenylyl-sulfate reductase (thioredoxin)"/>
    <property type="evidence" value="ECO:0007669"/>
    <property type="project" value="UniProtKB-UniRule"/>
</dbReference>
<dbReference type="CDD" id="cd23945">
    <property type="entry name" value="PAPS_reductase"/>
    <property type="match status" value="1"/>
</dbReference>
<dbReference type="FunFam" id="3.40.50.620:FF:000043">
    <property type="entry name" value="Phosphoadenosine phosphosulfate reductase"/>
    <property type="match status" value="1"/>
</dbReference>
<dbReference type="Gene3D" id="3.40.50.620">
    <property type="entry name" value="HUPs"/>
    <property type="match status" value="1"/>
</dbReference>
<dbReference type="HAMAP" id="MF_00063">
    <property type="entry name" value="CysH"/>
    <property type="match status" value="1"/>
</dbReference>
<dbReference type="InterPro" id="IPR004511">
    <property type="entry name" value="PAPS/APS_Rdtase"/>
</dbReference>
<dbReference type="InterPro" id="IPR002500">
    <property type="entry name" value="PAPS_reduct_dom"/>
</dbReference>
<dbReference type="InterPro" id="IPR011800">
    <property type="entry name" value="PAPS_reductase_CysH"/>
</dbReference>
<dbReference type="InterPro" id="IPR014729">
    <property type="entry name" value="Rossmann-like_a/b/a_fold"/>
</dbReference>
<dbReference type="NCBIfam" id="TIGR00434">
    <property type="entry name" value="cysH"/>
    <property type="match status" value="1"/>
</dbReference>
<dbReference type="NCBIfam" id="TIGR02057">
    <property type="entry name" value="PAPS_reductase"/>
    <property type="match status" value="1"/>
</dbReference>
<dbReference type="NCBIfam" id="NF002537">
    <property type="entry name" value="PRK02090.1"/>
    <property type="match status" value="1"/>
</dbReference>
<dbReference type="PANTHER" id="PTHR46509">
    <property type="entry name" value="PHOSPHOADENOSINE PHOSPHOSULFATE REDUCTASE"/>
    <property type="match status" value="1"/>
</dbReference>
<dbReference type="PANTHER" id="PTHR46509:SF1">
    <property type="entry name" value="PHOSPHOADENOSINE PHOSPHOSULFATE REDUCTASE"/>
    <property type="match status" value="1"/>
</dbReference>
<dbReference type="Pfam" id="PF01507">
    <property type="entry name" value="PAPS_reduct"/>
    <property type="match status" value="1"/>
</dbReference>
<dbReference type="PIRSF" id="PIRSF000857">
    <property type="entry name" value="PAPS_reductase"/>
    <property type="match status" value="1"/>
</dbReference>
<dbReference type="SUPFAM" id="SSF52402">
    <property type="entry name" value="Adenine nucleotide alpha hydrolases-like"/>
    <property type="match status" value="1"/>
</dbReference>
<sequence>MSKLDLNALNELPKVDRILALAETNAELEKLDAEGRVAWALDNLPGEYVLSSSFGIQAAVSLHLVNQIHPDIPVILTDTGYLFPETYRFIDELTDKLKLNLKVYRATESAAWQEARYGKLWEQGVEGIEKYNDINKVEPMNRALKELNAQTWFAGLRREQSGSRANLPVLAIQRGVFKVLPIIDWDNRTIYQYLQKHGLKYHPLWDEGYLSVGDTHTTRKWEPGMSEEETRFFGLKRECGLHEG</sequence>
<gene>
    <name evidence="1" type="primary">cysH</name>
    <name type="ordered locus">ECIAI1_2866</name>
</gene>
<protein>
    <recommendedName>
        <fullName evidence="1">Phosphoadenosine 5'-phosphosulfate reductase</fullName>
        <shortName evidence="1">PAPS reductase</shortName>
        <ecNumber evidence="1">1.8.4.8</ecNumber>
    </recommendedName>
    <alternativeName>
        <fullName evidence="1">3'-phosphoadenylylsulfate reductase</fullName>
    </alternativeName>
    <alternativeName>
        <fullName evidence="1">PAPS reductase, thioredoxin dependent</fullName>
    </alternativeName>
    <alternativeName>
        <fullName evidence="1">PAPS sulfotransferase</fullName>
    </alternativeName>
    <alternativeName>
        <fullName evidence="1">PAdoPS reductase</fullName>
    </alternativeName>
</protein>